<gene>
    <name type="primary">BBXA1</name>
    <name type="synonym">BBX</name>
</gene>
<name>BXA1_BOMMO</name>
<protein>
    <recommendedName>
        <fullName>Bombyxin A-1</fullName>
        <shortName>BBX-A1</shortName>
    </recommendedName>
    <alternativeName>
        <fullName>4K-prothoracicotropic hormone</fullName>
        <shortName>4K-PTTH</shortName>
    </alternativeName>
    <component>
        <recommendedName>
            <fullName>Bombyxin A-1 B chain</fullName>
        </recommendedName>
    </component>
    <component>
        <recommendedName>
            <fullName>Bombyxin A-1 A chain</fullName>
        </recommendedName>
    </component>
</protein>
<proteinExistence type="inferred from homology"/>
<dbReference type="EMBL" id="D00340">
    <property type="protein sequence ID" value="BAA00246.1"/>
    <property type="molecule type" value="Genomic_DNA"/>
</dbReference>
<dbReference type="PIR" id="A48322">
    <property type="entry name" value="A48322"/>
</dbReference>
<dbReference type="FunCoup" id="Q17192">
    <property type="interactions" value="162"/>
</dbReference>
<dbReference type="STRING" id="7091.Q17192"/>
<dbReference type="EnsemblMetazoa" id="XM_004934049.4">
    <property type="protein sequence ID" value="XP_004934106.1"/>
    <property type="gene ID" value="LOC101736783"/>
</dbReference>
<dbReference type="KEGG" id="bmor:101736783"/>
<dbReference type="HOGENOM" id="CLU_125164_2_0_1"/>
<dbReference type="InParanoid" id="Q17192"/>
<dbReference type="OrthoDB" id="493443at7088"/>
<dbReference type="Proteomes" id="UP000005204">
    <property type="component" value="Unassembled WGS sequence"/>
</dbReference>
<dbReference type="GO" id="GO:0005615">
    <property type="term" value="C:extracellular space"/>
    <property type="evidence" value="ECO:0007669"/>
    <property type="project" value="InterPro"/>
</dbReference>
<dbReference type="GO" id="GO:0008083">
    <property type="term" value="F:growth factor activity"/>
    <property type="evidence" value="ECO:0007669"/>
    <property type="project" value="InterPro"/>
</dbReference>
<dbReference type="GO" id="GO:0005179">
    <property type="term" value="F:hormone activity"/>
    <property type="evidence" value="ECO:0007669"/>
    <property type="project" value="UniProtKB-KW"/>
</dbReference>
<dbReference type="CDD" id="cd04366">
    <property type="entry name" value="IlGF_insulin_bombyxin_like"/>
    <property type="match status" value="1"/>
</dbReference>
<dbReference type="Gene3D" id="1.10.100.10">
    <property type="entry name" value="Insulin-like"/>
    <property type="match status" value="1"/>
</dbReference>
<dbReference type="InterPro" id="IPR017097">
    <property type="entry name" value="Bombyxin"/>
</dbReference>
<dbReference type="InterPro" id="IPR030680">
    <property type="entry name" value="Bombyxin_A"/>
</dbReference>
<dbReference type="InterPro" id="IPR016179">
    <property type="entry name" value="Insulin-like"/>
</dbReference>
<dbReference type="InterPro" id="IPR036438">
    <property type="entry name" value="Insulin-like_sf"/>
</dbReference>
<dbReference type="InterPro" id="IPR022353">
    <property type="entry name" value="Insulin_CS"/>
</dbReference>
<dbReference type="InterPro" id="IPR022352">
    <property type="entry name" value="Insulin_family"/>
</dbReference>
<dbReference type="PANTHER" id="PTHR13647:SF4">
    <property type="entry name" value="INSULIN-LIKE PEPTIDE 1-RELATED"/>
    <property type="match status" value="1"/>
</dbReference>
<dbReference type="PANTHER" id="PTHR13647">
    <property type="entry name" value="INSULIN-LIKE PEPTIDE 2-RELATED"/>
    <property type="match status" value="1"/>
</dbReference>
<dbReference type="Pfam" id="PF00049">
    <property type="entry name" value="Insulin"/>
    <property type="match status" value="1"/>
</dbReference>
<dbReference type="PIRSF" id="PIRSF037038">
    <property type="entry name" value="Bombyxin"/>
    <property type="match status" value="1"/>
</dbReference>
<dbReference type="PIRSF" id="PIRSF500312">
    <property type="entry name" value="Bombyxin_A"/>
    <property type="match status" value="1"/>
</dbReference>
<dbReference type="PRINTS" id="PR02003">
    <property type="entry name" value="BOMBYXIN"/>
</dbReference>
<dbReference type="PRINTS" id="PR00276">
    <property type="entry name" value="INSULINFAMLY"/>
</dbReference>
<dbReference type="SMART" id="SM00078">
    <property type="entry name" value="IlGF"/>
    <property type="match status" value="1"/>
</dbReference>
<dbReference type="SUPFAM" id="SSF56994">
    <property type="entry name" value="Insulin-like"/>
    <property type="match status" value="1"/>
</dbReference>
<dbReference type="PROSITE" id="PS00262">
    <property type="entry name" value="INSULIN"/>
    <property type="match status" value="1"/>
</dbReference>
<feature type="signal peptide" evidence="1">
    <location>
        <begin position="1"/>
        <end position="19"/>
    </location>
</feature>
<feature type="peptide" id="PRO_0000015962" description="Bombyxin A-1 B chain">
    <location>
        <begin position="20"/>
        <end position="47"/>
    </location>
</feature>
<feature type="propeptide" id="PRO_0000015963" description="C peptide like">
    <location>
        <begin position="50"/>
        <end position="70"/>
    </location>
</feature>
<feature type="peptide" id="PRO_0000015964" description="Bombyxin A-1 A chain">
    <location>
        <begin position="73"/>
        <end position="92"/>
    </location>
</feature>
<feature type="modified residue" description="Pyrrolidone carboxylic acid" evidence="1">
    <location>
        <position position="20"/>
    </location>
</feature>
<feature type="disulfide bond" description="Interchain (between B and A chains)" evidence="1">
    <location>
        <begin position="29"/>
        <end position="79"/>
    </location>
</feature>
<feature type="disulfide bond" description="Interchain (between B and A chains)" evidence="1">
    <location>
        <begin position="41"/>
        <end position="92"/>
    </location>
</feature>
<feature type="disulfide bond" evidence="1">
    <location>
        <begin position="78"/>
        <end position="83"/>
    </location>
</feature>
<sequence length="92" mass="10271">MKILLAIALMLSTVMWVSTQQPQRVHTYCGRHLARTLADLCWEAGVDKRSGAQFASYGSAWLMPYSEGRGKRGIVDECCLRPCSVDVLLSYC</sequence>
<keyword id="KW-0165">Cleavage on pair of basic residues</keyword>
<keyword id="KW-1015">Disulfide bond</keyword>
<keyword id="KW-0372">Hormone</keyword>
<keyword id="KW-0873">Pyrrolidone carboxylic acid</keyword>
<keyword id="KW-1185">Reference proteome</keyword>
<keyword id="KW-0964">Secreted</keyword>
<keyword id="KW-0732">Signal</keyword>
<evidence type="ECO:0000250" key="1"/>
<evidence type="ECO:0000305" key="2"/>
<comment type="function">
    <text>Brain peptide responsible for activation of prothoracic glands to produce ecdysone in insects.</text>
</comment>
<comment type="subunit">
    <text>Heterodimer of a B chain and an A chain linked by two disulfide bonds.</text>
</comment>
<comment type="subcellular location">
    <subcellularLocation>
        <location>Secreted</location>
    </subcellularLocation>
</comment>
<comment type="miscellaneous">
    <text>Silk worm has two kinds of PTTH: 4K-PTTH and 22K-PTTH; there are many forms of 4K-PTTH.</text>
</comment>
<comment type="similarity">
    <text evidence="2">Belongs to the insulin family.</text>
</comment>
<reference key="1">
    <citation type="journal article" date="1989" name="Dev. Growth Differ.">
        <title>Cloning of a gene encoding bombyxin, an insulin-like brain secretory peptide of the silkmoth Bombyx mori with prothoracicotropic activity.</title>
        <authorList>
            <person name="Iwami M."/>
            <person name="Kawakami A."/>
            <person name="Ishizaki H."/>
            <person name="Takahashi S.Y."/>
            <person name="Adachi T."/>
            <person name="Suzuki Y."/>
            <person name="Nagasawa H."/>
            <person name="Suzuki A."/>
        </authorList>
    </citation>
    <scope>NUCLEOTIDE SEQUENCE [GENOMIC DNA]</scope>
    <source>
        <strain>Kinshu X Showa</strain>
        <tissue>Silk gland</tissue>
    </source>
</reference>
<reference key="2">
    <citation type="journal article" date="1996" name="J. Mol. Biol.">
        <title>Multiple gene copies for bombyxin, an insulin-related peptide of the silkmoth Bombyx mori: structural signs for gene rearrangement and duplication responsible for generation of multiple molecular forms of bombyxin.</title>
        <authorList>
            <person name="Kondo H."/>
            <person name="Ino M."/>
            <person name="Suzuki A."/>
            <person name="Ishizaki H."/>
            <person name="Iwami M."/>
        </authorList>
    </citation>
    <scope>NUCLEOTIDE SEQUENCE [GENOMIC DNA]</scope>
    <source>
        <strain>Kinshu X Showa</strain>
    </source>
</reference>
<accession>Q17192</accession>
<organism>
    <name type="scientific">Bombyx mori</name>
    <name type="common">Silk moth</name>
    <dbReference type="NCBI Taxonomy" id="7091"/>
    <lineage>
        <taxon>Eukaryota</taxon>
        <taxon>Metazoa</taxon>
        <taxon>Ecdysozoa</taxon>
        <taxon>Arthropoda</taxon>
        <taxon>Hexapoda</taxon>
        <taxon>Insecta</taxon>
        <taxon>Pterygota</taxon>
        <taxon>Neoptera</taxon>
        <taxon>Endopterygota</taxon>
        <taxon>Lepidoptera</taxon>
        <taxon>Glossata</taxon>
        <taxon>Ditrysia</taxon>
        <taxon>Bombycoidea</taxon>
        <taxon>Bombycidae</taxon>
        <taxon>Bombycinae</taxon>
        <taxon>Bombyx</taxon>
    </lineage>
</organism>